<dbReference type="EC" id="2.7.11.1"/>
<dbReference type="EMBL" id="S80221">
    <property type="protein sequence ID" value="AAB35608.1"/>
    <property type="molecule type" value="mRNA"/>
</dbReference>
<dbReference type="EMBL" id="U35345">
    <property type="protein sequence ID" value="AAA79064.1"/>
    <property type="molecule type" value="mRNA"/>
</dbReference>
<dbReference type="EMBL" id="U19967">
    <property type="protein sequence ID" value="AAF06695.1"/>
    <property type="molecule type" value="mRNA"/>
</dbReference>
<dbReference type="RefSeq" id="NP_001380632.1">
    <property type="nucleotide sequence ID" value="NM_001393703.1"/>
</dbReference>
<dbReference type="RefSeq" id="NP_445758.2">
    <property type="nucleotide sequence ID" value="NM_053306.3"/>
</dbReference>
<dbReference type="RefSeq" id="XP_003751114.1">
    <property type="nucleotide sequence ID" value="XM_003751066.3"/>
</dbReference>
<dbReference type="RefSeq" id="XP_006248535.1">
    <property type="nucleotide sequence ID" value="XM_006248473.2"/>
</dbReference>
<dbReference type="RefSeq" id="XP_008767000.1">
    <property type="nucleotide sequence ID" value="XM_008768778.2"/>
</dbReference>
<dbReference type="RefSeq" id="XP_063126511.1">
    <property type="nucleotide sequence ID" value="XM_063270441.1"/>
</dbReference>
<dbReference type="PDB" id="2DF6">
    <property type="method" value="X-ray"/>
    <property type="resolution" value="1.30 A"/>
    <property type="chains" value="C/D=180-197"/>
</dbReference>
<dbReference type="PDBsum" id="2DF6"/>
<dbReference type="SMR" id="Q64303"/>
<dbReference type="BioGRID" id="248079">
    <property type="interactions" value="5"/>
</dbReference>
<dbReference type="FunCoup" id="Q64303">
    <property type="interactions" value="4718"/>
</dbReference>
<dbReference type="IntAct" id="Q64303">
    <property type="interactions" value="1"/>
</dbReference>
<dbReference type="STRING" id="10116.ENSRNOP00000065949"/>
<dbReference type="iPTMnet" id="Q64303"/>
<dbReference type="PhosphoSitePlus" id="Q64303"/>
<dbReference type="jPOST" id="Q64303"/>
<dbReference type="PaxDb" id="10116-ENSRNOP00000040162"/>
<dbReference type="Ensembl" id="ENSRNOT00000049862.4">
    <property type="protein sequence ID" value="ENSRNOP00000040162.2"/>
    <property type="gene ID" value="ENSRNOG00000001747.6"/>
</dbReference>
<dbReference type="GeneID" id="29432"/>
<dbReference type="KEGG" id="rno:29432"/>
<dbReference type="UCSC" id="RGD:61953">
    <property type="organism name" value="rat"/>
</dbReference>
<dbReference type="AGR" id="RGD:61953"/>
<dbReference type="CTD" id="5062"/>
<dbReference type="RGD" id="61953">
    <property type="gene designation" value="Pak2"/>
</dbReference>
<dbReference type="eggNOG" id="KOG0578">
    <property type="taxonomic scope" value="Eukaryota"/>
</dbReference>
<dbReference type="GeneTree" id="ENSGT00950000182988"/>
<dbReference type="HOGENOM" id="CLU_000288_26_6_1"/>
<dbReference type="InParanoid" id="Q64303"/>
<dbReference type="OMA" id="VMMEYLA"/>
<dbReference type="OrthoDB" id="2914378at2759"/>
<dbReference type="PhylomeDB" id="Q64303"/>
<dbReference type="TreeFam" id="TF105351"/>
<dbReference type="BRENDA" id="2.7.12.2">
    <property type="organism ID" value="5301"/>
</dbReference>
<dbReference type="Reactome" id="R-RNO-202433">
    <property type="pathway name" value="Generation of second messenger molecules"/>
</dbReference>
<dbReference type="Reactome" id="R-RNO-2871796">
    <property type="pathway name" value="FCERI mediated MAPK activation"/>
</dbReference>
<dbReference type="Reactome" id="R-RNO-389359">
    <property type="pathway name" value="CD28 dependent Vav1 pathway"/>
</dbReference>
<dbReference type="Reactome" id="R-RNO-3928664">
    <property type="pathway name" value="Ephrin signaling"/>
</dbReference>
<dbReference type="Reactome" id="R-RNO-399954">
    <property type="pathway name" value="Sema3A PAK dependent Axon repulsion"/>
</dbReference>
<dbReference type="Reactome" id="R-RNO-4420097">
    <property type="pathway name" value="VEGFA-VEGFR2 Pathway"/>
</dbReference>
<dbReference type="Reactome" id="R-RNO-445355">
    <property type="pathway name" value="Smooth Muscle Contraction"/>
</dbReference>
<dbReference type="Reactome" id="R-RNO-5218920">
    <property type="pathway name" value="VEGFR2 mediated vascular permeability"/>
</dbReference>
<dbReference type="Reactome" id="R-RNO-5621575">
    <property type="pathway name" value="CD209 (DC-SIGN) signaling"/>
</dbReference>
<dbReference type="Reactome" id="R-RNO-5627123">
    <property type="pathway name" value="RHO GTPases activate PAKs"/>
</dbReference>
<dbReference type="Reactome" id="R-RNO-5687128">
    <property type="pathway name" value="MAPK6/MAPK4 signaling"/>
</dbReference>
<dbReference type="Reactome" id="R-RNO-9013149">
    <property type="pathway name" value="RAC1 GTPase cycle"/>
</dbReference>
<dbReference type="Reactome" id="R-RNO-9013404">
    <property type="pathway name" value="RAC2 GTPase cycle"/>
</dbReference>
<dbReference type="Reactome" id="R-RNO-9013406">
    <property type="pathway name" value="RHOQ GTPase cycle"/>
</dbReference>
<dbReference type="Reactome" id="R-RNO-9013407">
    <property type="pathway name" value="RHOH GTPase cycle"/>
</dbReference>
<dbReference type="Reactome" id="R-RNO-9013408">
    <property type="pathway name" value="RHOG GTPase cycle"/>
</dbReference>
<dbReference type="Reactome" id="R-RNO-9013420">
    <property type="pathway name" value="RHOU GTPase cycle"/>
</dbReference>
<dbReference type="Reactome" id="R-RNO-9013424">
    <property type="pathway name" value="RHOV GTPase cycle"/>
</dbReference>
<dbReference type="EvolutionaryTrace" id="Q64303"/>
<dbReference type="PRO" id="PR:Q64303"/>
<dbReference type="Proteomes" id="UP000002494">
    <property type="component" value="Chromosome 11"/>
</dbReference>
<dbReference type="Bgee" id="ENSRNOG00000001747">
    <property type="expression patterns" value="Expressed in spleen and 19 other cell types or tissues"/>
</dbReference>
<dbReference type="GO" id="GO:0005911">
    <property type="term" value="C:cell-cell junction"/>
    <property type="evidence" value="ECO:0000266"/>
    <property type="project" value="RGD"/>
</dbReference>
<dbReference type="GO" id="GO:0005737">
    <property type="term" value="C:cytoplasm"/>
    <property type="evidence" value="ECO:0000266"/>
    <property type="project" value="RGD"/>
</dbReference>
<dbReference type="GO" id="GO:0005829">
    <property type="term" value="C:cytosol"/>
    <property type="evidence" value="ECO:0007669"/>
    <property type="project" value="Ensembl"/>
</dbReference>
<dbReference type="GO" id="GO:0005925">
    <property type="term" value="C:focal adhesion"/>
    <property type="evidence" value="ECO:0007669"/>
    <property type="project" value="Ensembl"/>
</dbReference>
<dbReference type="GO" id="GO:0098978">
    <property type="term" value="C:glutamatergic synapse"/>
    <property type="evidence" value="ECO:0000266"/>
    <property type="project" value="RGD"/>
</dbReference>
<dbReference type="GO" id="GO:0016020">
    <property type="term" value="C:membrane"/>
    <property type="evidence" value="ECO:0007669"/>
    <property type="project" value="UniProtKB-SubCell"/>
</dbReference>
<dbReference type="GO" id="GO:0016607">
    <property type="term" value="C:nuclear speck"/>
    <property type="evidence" value="ECO:0007669"/>
    <property type="project" value="Ensembl"/>
</dbReference>
<dbReference type="GO" id="GO:0005634">
    <property type="term" value="C:nucleus"/>
    <property type="evidence" value="ECO:0000266"/>
    <property type="project" value="RGD"/>
</dbReference>
<dbReference type="GO" id="GO:0048471">
    <property type="term" value="C:perinuclear region of cytoplasm"/>
    <property type="evidence" value="ECO:0007669"/>
    <property type="project" value="UniProtKB-SubCell"/>
</dbReference>
<dbReference type="GO" id="GO:0014069">
    <property type="term" value="C:postsynaptic density"/>
    <property type="evidence" value="ECO:0000266"/>
    <property type="project" value="RGD"/>
</dbReference>
<dbReference type="GO" id="GO:0030141">
    <property type="term" value="C:secretory granule"/>
    <property type="evidence" value="ECO:0000314"/>
    <property type="project" value="RGD"/>
</dbReference>
<dbReference type="GO" id="GO:0005524">
    <property type="term" value="F:ATP binding"/>
    <property type="evidence" value="ECO:0007669"/>
    <property type="project" value="UniProtKB-KW"/>
</dbReference>
<dbReference type="GO" id="GO:0042802">
    <property type="term" value="F:identical protein binding"/>
    <property type="evidence" value="ECO:0000266"/>
    <property type="project" value="RGD"/>
</dbReference>
<dbReference type="GO" id="GO:0004672">
    <property type="term" value="F:protein kinase activity"/>
    <property type="evidence" value="ECO:0000266"/>
    <property type="project" value="RGD"/>
</dbReference>
<dbReference type="GO" id="GO:0019901">
    <property type="term" value="F:protein kinase binding"/>
    <property type="evidence" value="ECO:0000266"/>
    <property type="project" value="RGD"/>
</dbReference>
<dbReference type="GO" id="GO:0106310">
    <property type="term" value="F:protein serine kinase activity"/>
    <property type="evidence" value="ECO:0007669"/>
    <property type="project" value="RHEA"/>
</dbReference>
<dbReference type="GO" id="GO:0004674">
    <property type="term" value="F:protein serine/threonine kinase activity"/>
    <property type="evidence" value="ECO:0000250"/>
    <property type="project" value="UniProtKB"/>
</dbReference>
<dbReference type="GO" id="GO:0030296">
    <property type="term" value="F:protein tyrosine kinase activator activity"/>
    <property type="evidence" value="ECO:0000266"/>
    <property type="project" value="RGD"/>
</dbReference>
<dbReference type="GO" id="GO:0031267">
    <property type="term" value="F:small GTPase binding"/>
    <property type="evidence" value="ECO:0000266"/>
    <property type="project" value="RGD"/>
</dbReference>
<dbReference type="GO" id="GO:0034333">
    <property type="term" value="P:adherens junction assembly"/>
    <property type="evidence" value="ECO:0000266"/>
    <property type="project" value="RGD"/>
</dbReference>
<dbReference type="GO" id="GO:0070830">
    <property type="term" value="P:bicellular tight junction assembly"/>
    <property type="evidence" value="ECO:0000266"/>
    <property type="project" value="RGD"/>
</dbReference>
<dbReference type="GO" id="GO:0003300">
    <property type="term" value="P:cardiac muscle hypertrophy"/>
    <property type="evidence" value="ECO:0000270"/>
    <property type="project" value="RGD"/>
</dbReference>
<dbReference type="GO" id="GO:0016477">
    <property type="term" value="P:cell migration"/>
    <property type="evidence" value="ECO:0000318"/>
    <property type="project" value="GO_Central"/>
</dbReference>
<dbReference type="GO" id="GO:0009267">
    <property type="term" value="P:cellular response to starvation"/>
    <property type="evidence" value="ECO:0000318"/>
    <property type="project" value="GO_Central"/>
</dbReference>
<dbReference type="GO" id="GO:0071560">
    <property type="term" value="P:cellular response to transforming growth factor beta stimulus"/>
    <property type="evidence" value="ECO:0000270"/>
    <property type="project" value="RGD"/>
</dbReference>
<dbReference type="GO" id="GO:0060996">
    <property type="term" value="P:dendritic spine development"/>
    <property type="evidence" value="ECO:0000266"/>
    <property type="project" value="RGD"/>
</dbReference>
<dbReference type="GO" id="GO:0035556">
    <property type="term" value="P:intracellular signal transduction"/>
    <property type="evidence" value="ECO:0000266"/>
    <property type="project" value="RGD"/>
</dbReference>
<dbReference type="GO" id="GO:0043066">
    <property type="term" value="P:negative regulation of apoptotic process"/>
    <property type="evidence" value="ECO:0000266"/>
    <property type="project" value="RGD"/>
</dbReference>
<dbReference type="GO" id="GO:0051497">
    <property type="term" value="P:negative regulation of stress fiber assembly"/>
    <property type="evidence" value="ECO:0000266"/>
    <property type="project" value="RGD"/>
</dbReference>
<dbReference type="GO" id="GO:2001238">
    <property type="term" value="P:positive regulation of extrinsic apoptotic signaling pathway"/>
    <property type="evidence" value="ECO:0000266"/>
    <property type="project" value="RGD"/>
</dbReference>
<dbReference type="GO" id="GO:0150105">
    <property type="term" value="P:protein localization to cell-cell junction"/>
    <property type="evidence" value="ECO:0000266"/>
    <property type="project" value="RGD"/>
</dbReference>
<dbReference type="GO" id="GO:0050770">
    <property type="term" value="P:regulation of axonogenesis"/>
    <property type="evidence" value="ECO:0000318"/>
    <property type="project" value="GO_Central"/>
</dbReference>
<dbReference type="GO" id="GO:0051493">
    <property type="term" value="P:regulation of cytoskeleton organization"/>
    <property type="evidence" value="ECO:0000266"/>
    <property type="project" value="RGD"/>
</dbReference>
<dbReference type="GO" id="GO:0043408">
    <property type="term" value="P:regulation of MAPK cascade"/>
    <property type="evidence" value="ECO:0000318"/>
    <property type="project" value="GO_Central"/>
</dbReference>
<dbReference type="CDD" id="cd01093">
    <property type="entry name" value="CRIB_PAK_like"/>
    <property type="match status" value="1"/>
</dbReference>
<dbReference type="CDD" id="cd06655">
    <property type="entry name" value="STKc_PAK2"/>
    <property type="match status" value="1"/>
</dbReference>
<dbReference type="FunFam" id="1.10.510.10:FF:000011">
    <property type="entry name" value="Non-specific serine/threonine protein kinase"/>
    <property type="match status" value="1"/>
</dbReference>
<dbReference type="FunFam" id="3.30.200.20:FF:000069">
    <property type="entry name" value="Non-specific serine/threonine protein kinase"/>
    <property type="match status" value="1"/>
</dbReference>
<dbReference type="FunFam" id="3.90.810.10:FF:000001">
    <property type="entry name" value="Non-specific serine/threonine protein kinase"/>
    <property type="match status" value="1"/>
</dbReference>
<dbReference type="Gene3D" id="3.90.810.10">
    <property type="entry name" value="CRIB domain"/>
    <property type="match status" value="1"/>
</dbReference>
<dbReference type="Gene3D" id="3.30.200.20">
    <property type="entry name" value="Phosphorylase Kinase, domain 1"/>
    <property type="match status" value="1"/>
</dbReference>
<dbReference type="Gene3D" id="1.10.510.10">
    <property type="entry name" value="Transferase(Phosphotransferase) domain 1"/>
    <property type="match status" value="1"/>
</dbReference>
<dbReference type="InterPro" id="IPR000095">
    <property type="entry name" value="CRIB_dom"/>
</dbReference>
<dbReference type="InterPro" id="IPR036936">
    <property type="entry name" value="CRIB_dom_sf"/>
</dbReference>
<dbReference type="InterPro" id="IPR011009">
    <property type="entry name" value="Kinase-like_dom_sf"/>
</dbReference>
<dbReference type="InterPro" id="IPR051931">
    <property type="entry name" value="PAK3-like"/>
</dbReference>
<dbReference type="InterPro" id="IPR033923">
    <property type="entry name" value="PAK_BD"/>
</dbReference>
<dbReference type="InterPro" id="IPR000719">
    <property type="entry name" value="Prot_kinase_dom"/>
</dbReference>
<dbReference type="InterPro" id="IPR017441">
    <property type="entry name" value="Protein_kinase_ATP_BS"/>
</dbReference>
<dbReference type="InterPro" id="IPR008271">
    <property type="entry name" value="Ser/Thr_kinase_AS"/>
</dbReference>
<dbReference type="InterPro" id="IPR035064">
    <property type="entry name" value="STK_PAK2"/>
</dbReference>
<dbReference type="PANTHER" id="PTHR45832:SF21">
    <property type="entry name" value="NON-SPECIFIC SERINE_THREONINE PROTEIN KINASE"/>
    <property type="match status" value="1"/>
</dbReference>
<dbReference type="PANTHER" id="PTHR45832">
    <property type="entry name" value="SERINE/THREONINE-PROTEIN KINASE SAMKA-RELATED-RELATED"/>
    <property type="match status" value="1"/>
</dbReference>
<dbReference type="Pfam" id="PF00786">
    <property type="entry name" value="PBD"/>
    <property type="match status" value="1"/>
</dbReference>
<dbReference type="Pfam" id="PF00069">
    <property type="entry name" value="Pkinase"/>
    <property type="match status" value="1"/>
</dbReference>
<dbReference type="SMART" id="SM00285">
    <property type="entry name" value="PBD"/>
    <property type="match status" value="1"/>
</dbReference>
<dbReference type="SMART" id="SM00220">
    <property type="entry name" value="S_TKc"/>
    <property type="match status" value="1"/>
</dbReference>
<dbReference type="SUPFAM" id="SSF56112">
    <property type="entry name" value="Protein kinase-like (PK-like)"/>
    <property type="match status" value="1"/>
</dbReference>
<dbReference type="PROSITE" id="PS50108">
    <property type="entry name" value="CRIB"/>
    <property type="match status" value="1"/>
</dbReference>
<dbReference type="PROSITE" id="PS00107">
    <property type="entry name" value="PROTEIN_KINASE_ATP"/>
    <property type="match status" value="1"/>
</dbReference>
<dbReference type="PROSITE" id="PS50011">
    <property type="entry name" value="PROTEIN_KINASE_DOM"/>
    <property type="match status" value="1"/>
</dbReference>
<dbReference type="PROSITE" id="PS00108">
    <property type="entry name" value="PROTEIN_KINASE_ST"/>
    <property type="match status" value="1"/>
</dbReference>
<evidence type="ECO:0000250" key="1">
    <source>
        <dbReference type="UniProtKB" id="Q13153"/>
    </source>
</evidence>
<evidence type="ECO:0000250" key="2">
    <source>
        <dbReference type="UniProtKB" id="Q13177"/>
    </source>
</evidence>
<evidence type="ECO:0000250" key="3">
    <source>
        <dbReference type="UniProtKB" id="Q8CIN4"/>
    </source>
</evidence>
<evidence type="ECO:0000255" key="4">
    <source>
        <dbReference type="PROSITE-ProRule" id="PRU00057"/>
    </source>
</evidence>
<evidence type="ECO:0000255" key="5">
    <source>
        <dbReference type="PROSITE-ProRule" id="PRU00159"/>
    </source>
</evidence>
<evidence type="ECO:0000255" key="6">
    <source>
        <dbReference type="PROSITE-ProRule" id="PRU10027"/>
    </source>
</evidence>
<evidence type="ECO:0000256" key="7">
    <source>
        <dbReference type="SAM" id="MobiDB-lite"/>
    </source>
</evidence>
<evidence type="ECO:0000305" key="8"/>
<evidence type="ECO:0007744" key="9">
    <source>
    </source>
</evidence>
<evidence type="ECO:0007744" key="10">
    <source>
    </source>
</evidence>
<evidence type="ECO:0007829" key="11">
    <source>
        <dbReference type="PDB" id="2DF6"/>
    </source>
</evidence>
<organism>
    <name type="scientific">Rattus norvegicus</name>
    <name type="common">Rat</name>
    <dbReference type="NCBI Taxonomy" id="10116"/>
    <lineage>
        <taxon>Eukaryota</taxon>
        <taxon>Metazoa</taxon>
        <taxon>Chordata</taxon>
        <taxon>Craniata</taxon>
        <taxon>Vertebrata</taxon>
        <taxon>Euteleostomi</taxon>
        <taxon>Mammalia</taxon>
        <taxon>Eutheria</taxon>
        <taxon>Euarchontoglires</taxon>
        <taxon>Glires</taxon>
        <taxon>Rodentia</taxon>
        <taxon>Myomorpha</taxon>
        <taxon>Muroidea</taxon>
        <taxon>Muridae</taxon>
        <taxon>Murinae</taxon>
        <taxon>Rattus</taxon>
    </lineage>
</organism>
<proteinExistence type="evidence at protein level"/>
<accession>Q64303</accession>
<accession>Q9QYU0</accession>
<reference key="1">
    <citation type="journal article" date="1995" name="J. Biol. Chem.">
        <title>Identification and molecular cloning of a p21cdc42/rac1-activated serine/threonine kinase that is rapidly activated by thrombin in platelets.</title>
        <authorList>
            <person name="Teo M."/>
            <person name="Manser E."/>
            <person name="Lim L."/>
        </authorList>
    </citation>
    <scope>NUCLEOTIDE SEQUENCE [MRNA]</scope>
    <scope>PARTIAL PROTEIN SEQUENCE</scope>
    <source>
        <tissue>Brain</tissue>
        <tissue>Testis</tissue>
    </source>
</reference>
<reference key="2">
    <citation type="submission" date="1995-09" db="EMBL/GenBank/DDBJ databases">
        <authorList>
            <person name="Mabel T."/>
        </authorList>
    </citation>
    <scope>NUCLEOTIDE SEQUENCE [MRNA]</scope>
</reference>
<reference key="3">
    <citation type="submission" date="1999-11" db="EMBL/GenBank/DDBJ databases">
        <title>Conservation of STE20-responsive MAP kinase activation in eukaryotic organisms.</title>
        <authorList>
            <person name="Marcus S."/>
            <person name="Polverino A."/>
            <person name="Robbins D."/>
            <person name="Hutchison M."/>
            <person name="Xu H."/>
            <person name="Asouline G."/>
            <person name="Cobb M."/>
            <person name="Wigler M."/>
        </authorList>
    </citation>
    <scope>NUCLEOTIDE SEQUENCE [MRNA]</scope>
    <source>
        <tissue>Forebrain</tissue>
    </source>
</reference>
<reference key="4">
    <citation type="journal article" date="2006" name="J. Proteome Res.">
        <title>Phosphoproteomic analysis of rat liver by high capacity IMAC and LC-MS/MS.</title>
        <authorList>
            <person name="Moser K."/>
            <person name="White F.M."/>
        </authorList>
    </citation>
    <scope>IDENTIFICATION BY MASS SPECTROMETRY [LARGE SCALE ANALYSIS]</scope>
</reference>
<reference key="5">
    <citation type="journal article" date="2006" name="Proc. Natl. Acad. Sci. U.S.A.">
        <title>Quantitative phosphoproteomics of vasopressin-sensitive renal cells: regulation of aquaporin-2 phosphorylation at two sites.</title>
        <authorList>
            <person name="Hoffert J.D."/>
            <person name="Pisitkun T."/>
            <person name="Wang G."/>
            <person name="Shen R.-F."/>
            <person name="Knepper M.A."/>
        </authorList>
    </citation>
    <scope>PHOSPHORYLATION [LARGE SCALE ANALYSIS] AT SER-141</scope>
    <scope>IDENTIFICATION BY MASS SPECTROMETRY [LARGE SCALE ANALYSIS]</scope>
</reference>
<reference key="6">
    <citation type="journal article" date="2012" name="Nat. Commun.">
        <title>Quantitative maps of protein phosphorylation sites across 14 different rat organs and tissues.</title>
        <authorList>
            <person name="Lundby A."/>
            <person name="Secher A."/>
            <person name="Lage K."/>
            <person name="Nordsborg N.B."/>
            <person name="Dmytriyev A."/>
            <person name="Lundby C."/>
            <person name="Olsen J.V."/>
        </authorList>
    </citation>
    <scope>PHOSPHORYLATION [LARGE SCALE ANALYSIS] AT SER-2; SER-59; SER-141; THR-143 AND SER-152</scope>
    <scope>IDENTIFICATION BY MASS SPECTROMETRY [LARGE SCALE ANALYSIS]</scope>
</reference>
<comment type="function">
    <text evidence="2">Serine/threonine protein kinase that plays a role in a variety of different signaling pathways including cytoskeleton regulation, cell motility, cell cycle progression, apoptosis or proliferation. Acts as a downstream effector of the small GTPases CDC42 and RAC1. Activation by the binding of active CDC42 and RAC1 results in a conformational change and a subsequent autophosphorylation on several serine and/or threonine residues. Full-length PAK2 stimulates cell survival and cell growth. Phosphorylates MAPK4 and MAPK6 and activates the downstream target MAPKAPK5, a regulator of F-actin polymerization and cell migration. Phosphorylates JUN and plays an important role in EGF-induced cell proliferation. Phosphorylates many other substrates including histone H4 to promote assembly of H3.3 and H4 into nucleosomes, BAD, ribosomal protein S6, or MBP. Phosphorylates CASP7, thereby preventing its activity. Additionally, associates with ARHGEF7 and GIT1 to perform kinase-independent functions such as spindle orientation control during mitosis. On the other hand, apoptotic stimuli such as DNA damage lead to caspase-mediated cleavage of PAK2, generating PAK-2p34, an active p34 fragment that translocates to the nucleus and promotes cellular apoptosis involving the JNK signaling pathway. Caspase-activated PAK2 phosphorylates MKNK1 and reduces cellular translation (By similarity).</text>
</comment>
<comment type="catalytic activity">
    <reaction evidence="2">
        <text>L-seryl-[protein] + ATP = O-phospho-L-seryl-[protein] + ADP + H(+)</text>
        <dbReference type="Rhea" id="RHEA:17989"/>
        <dbReference type="Rhea" id="RHEA-COMP:9863"/>
        <dbReference type="Rhea" id="RHEA-COMP:11604"/>
        <dbReference type="ChEBI" id="CHEBI:15378"/>
        <dbReference type="ChEBI" id="CHEBI:29999"/>
        <dbReference type="ChEBI" id="CHEBI:30616"/>
        <dbReference type="ChEBI" id="CHEBI:83421"/>
        <dbReference type="ChEBI" id="CHEBI:456216"/>
        <dbReference type="EC" id="2.7.11.1"/>
    </reaction>
    <physiologicalReaction direction="left-to-right" evidence="2">
        <dbReference type="Rhea" id="RHEA:17990"/>
    </physiologicalReaction>
</comment>
<comment type="catalytic activity">
    <reaction evidence="2">
        <text>L-threonyl-[protein] + ATP = O-phospho-L-threonyl-[protein] + ADP + H(+)</text>
        <dbReference type="Rhea" id="RHEA:46608"/>
        <dbReference type="Rhea" id="RHEA-COMP:11060"/>
        <dbReference type="Rhea" id="RHEA-COMP:11605"/>
        <dbReference type="ChEBI" id="CHEBI:15378"/>
        <dbReference type="ChEBI" id="CHEBI:30013"/>
        <dbReference type="ChEBI" id="CHEBI:30616"/>
        <dbReference type="ChEBI" id="CHEBI:61977"/>
        <dbReference type="ChEBI" id="CHEBI:456216"/>
        <dbReference type="EC" id="2.7.11.1"/>
    </reaction>
    <physiologicalReaction direction="left-to-right" evidence="2">
        <dbReference type="Rhea" id="RHEA:46609"/>
    </physiologicalReaction>
</comment>
<comment type="activity regulation">
    <text evidence="2">Activated by binding small G proteins. Binding of GTP-bound CDC42 or RAC1 to the autoregulatory region releases monomers from the autoinhibited dimer, enables phosphorylation of Thr-402 and allows the kinase domain to adopt an active structure. Following caspase cleavage, autophosphorylated PAK-2p34 is constitutively active (By similarity).</text>
</comment>
<comment type="subunit">
    <text evidence="2">Interacts tightly with GTP-bound but not GDP-bound CDC42/p21 and RAC1. Interacts with SH3MD4. Interacts with SCRIB. Interacts with ARHGEF7 and GIT1. PAK-2p34 interacts with ARHGAP10. Interacts with RAC1 (By similarity).</text>
</comment>
<comment type="subcellular location">
    <molecule>Serine/threonine-protein kinase PAK 2</molecule>
    <subcellularLocation>
        <location evidence="2">Cytoplasm</location>
    </subcellularLocation>
    <subcellularLocation>
        <location evidence="2">Nucleus</location>
    </subcellularLocation>
    <text evidence="2">MYO18A mediates the cellular distribution of the PAK2-ARHGEF7-GIT1 complex to the inner surface of the cell membrane.</text>
</comment>
<comment type="subcellular location">
    <molecule>PAK-2p34</molecule>
    <subcellularLocation>
        <location evidence="2">Nucleus</location>
    </subcellularLocation>
    <subcellularLocation>
        <location evidence="2">Cytoplasm</location>
        <location evidence="2">Perinuclear region</location>
    </subcellularLocation>
    <subcellularLocation>
        <location evidence="2">Membrane</location>
        <topology evidence="2">Lipid-anchor</topology>
    </subcellularLocation>
    <text evidence="2">Interaction with ARHGAP10 probably changes PAK-2p34 location to cytoplasmic perinuclear region. Myristoylation changes PAK-2p34 location to the membrane.</text>
</comment>
<comment type="PTM">
    <text evidence="2">Full-length PAK2 is autophosphorylated when activated by CDC42/p21. Following cleavage, both peptides, PAK-2p27 and PAK-2p34, become highly autophosphorylated. Autophosphorylation of PAK-2p27 can occur in the absence of any effectors and is dependent on phosphorylation of Thr-402, because PAK-2p27 is acting as an exogenous substrate (By similarity).</text>
</comment>
<comment type="PTM">
    <text evidence="2">During apoptosis proteolytically cleaved by caspase-3 or caspase-3-like proteases to yield active PAK-2p34.</text>
</comment>
<comment type="PTM">
    <text evidence="2">Ubiquitinated, leading to its proteasomal degradation.</text>
</comment>
<comment type="similarity">
    <text evidence="8">Belongs to the protein kinase superfamily. STE Ser/Thr protein kinase family. STE20 subfamily.</text>
</comment>
<feature type="initiator methionine" description="Removed" evidence="2">
    <location>
        <position position="1"/>
    </location>
</feature>
<feature type="chain" id="PRO_0000086468" description="Serine/threonine-protein kinase PAK 2">
    <location>
        <begin position="2"/>
        <end position="524"/>
    </location>
</feature>
<feature type="chain" id="PRO_0000304928" description="PAK-2p27" evidence="2">
    <location>
        <begin position="2"/>
        <end position="212"/>
    </location>
</feature>
<feature type="chain" id="PRO_0000304929" description="PAK-2p34" evidence="2">
    <location>
        <begin position="213"/>
        <end position="524"/>
    </location>
</feature>
<feature type="domain" description="CRIB" evidence="4">
    <location>
        <begin position="74"/>
        <end position="87"/>
    </location>
</feature>
<feature type="domain" description="Protein kinase" evidence="5">
    <location>
        <begin position="249"/>
        <end position="500"/>
    </location>
</feature>
<feature type="region of interest" description="Disordered" evidence="7">
    <location>
        <begin position="1"/>
        <end position="81"/>
    </location>
</feature>
<feature type="region of interest" description="Autoregulatory region" evidence="1">
    <location>
        <begin position="69"/>
        <end position="137"/>
    </location>
</feature>
<feature type="region of interest" description="GTPase-binding" evidence="1">
    <location>
        <begin position="69"/>
        <end position="112"/>
    </location>
</feature>
<feature type="region of interest" description="Linker">
    <location>
        <begin position="88"/>
        <end position="248"/>
    </location>
</feature>
<feature type="region of interest" description="Disordered" evidence="7">
    <location>
        <begin position="142"/>
        <end position="190"/>
    </location>
</feature>
<feature type="region of interest" description="Disordered" evidence="7">
    <location>
        <begin position="204"/>
        <end position="228"/>
    </location>
</feature>
<feature type="short sequence motif" description="Nuclear localization signal" evidence="2">
    <location>
        <begin position="245"/>
        <end position="251"/>
    </location>
</feature>
<feature type="compositionally biased region" description="Basic and acidic residues" evidence="7">
    <location>
        <begin position="67"/>
        <end position="81"/>
    </location>
</feature>
<feature type="compositionally biased region" description="Polar residues" evidence="7">
    <location>
        <begin position="155"/>
        <end position="167"/>
    </location>
</feature>
<feature type="compositionally biased region" description="Acidic residues" evidence="7">
    <location>
        <begin position="169"/>
        <end position="178"/>
    </location>
</feature>
<feature type="active site" description="Proton acceptor" evidence="5 6">
    <location>
        <position position="368"/>
    </location>
</feature>
<feature type="binding site" evidence="5">
    <location>
        <begin position="255"/>
        <end position="263"/>
    </location>
    <ligand>
        <name>ATP</name>
        <dbReference type="ChEBI" id="CHEBI:30616"/>
    </ligand>
</feature>
<feature type="binding site" evidence="5">
    <location>
        <position position="278"/>
    </location>
    <ligand>
        <name>ATP</name>
        <dbReference type="ChEBI" id="CHEBI:30616"/>
    </ligand>
</feature>
<feature type="site" description="Cleavage; by caspase-3 or caspase-3-like proteases" evidence="2">
    <location>
        <begin position="212"/>
        <end position="213"/>
    </location>
</feature>
<feature type="modified residue" description="N-acetylserine" evidence="2">
    <location>
        <position position="2"/>
    </location>
</feature>
<feature type="modified residue" description="Phosphoserine" evidence="10">
    <location>
        <position position="2"/>
    </location>
</feature>
<feature type="modified residue" description="Phosphoserine" evidence="2">
    <location>
        <position position="20"/>
    </location>
</feature>
<feature type="modified residue" description="Phosphoserine" evidence="2">
    <location>
        <position position="55"/>
    </location>
</feature>
<feature type="modified residue" description="Phosphoserine" evidence="2">
    <location>
        <position position="58"/>
    </location>
</feature>
<feature type="modified residue" description="Phosphoserine" evidence="10">
    <location>
        <position position="59"/>
    </location>
</feature>
<feature type="modified residue" description="Phosphothreonine" evidence="2">
    <location>
        <position position="60"/>
    </location>
</feature>
<feature type="modified residue" description="N6-acetyllysine" evidence="3">
    <location>
        <position position="62"/>
    </location>
</feature>
<feature type="modified residue" description="Phosphoserine" evidence="2">
    <location>
        <position position="64"/>
    </location>
</feature>
<feature type="modified residue" description="N6-acetyllysine" evidence="2">
    <location>
        <position position="128"/>
    </location>
</feature>
<feature type="modified residue" description="Phosphothreonine" evidence="2">
    <location>
        <position position="134"/>
    </location>
</feature>
<feature type="modified residue" description="Phosphotyrosine" evidence="2">
    <location>
        <position position="139"/>
    </location>
</feature>
<feature type="modified residue" description="Phosphoserine" evidence="9 10">
    <location>
        <position position="141"/>
    </location>
</feature>
<feature type="modified residue" description="Phosphothreonine" evidence="10">
    <location>
        <position position="143"/>
    </location>
</feature>
<feature type="modified residue" description="Phosphoserine" evidence="10">
    <location>
        <position position="152"/>
    </location>
</feature>
<feature type="modified residue" description="Phosphothreonine" evidence="2">
    <location>
        <position position="154"/>
    </location>
</feature>
<feature type="modified residue" description="Phosphothreonine" evidence="3">
    <location>
        <position position="159"/>
    </location>
</feature>
<feature type="modified residue" description="Phosphothreonine" evidence="2">
    <location>
        <position position="169"/>
    </location>
</feature>
<feature type="modified residue" description="Phosphoserine" evidence="2">
    <location>
        <position position="197"/>
    </location>
</feature>
<feature type="modified residue" description="Phosphothreonine; by autocatalysis" evidence="2">
    <location>
        <position position="402"/>
    </location>
</feature>
<feature type="sequence conflict" description="In Ref. 3; AAF06695." evidence="8" ref="3">
    <original>H</original>
    <variation>Y</variation>
    <location>
        <position position="82"/>
    </location>
</feature>
<feature type="sequence conflict" description="In Ref. 3; AAF06695." evidence="8" ref="3">
    <original>K</original>
    <variation>E</variation>
    <location>
        <position position="418"/>
    </location>
</feature>
<feature type="helix" evidence="11">
    <location>
        <begin position="188"/>
        <end position="190"/>
    </location>
</feature>
<name>PAK2_RAT</name>
<gene>
    <name type="primary">Pak2</name>
</gene>
<sequence>MSDNGELEDKPPAPPVRMSSTIFSTGGKDPLSANHSLKPLPSVPEEKKPRNKIISIFSSTEKGSKKKEKERPEISPPSDFEHTIHVGFDAVTGEFTGMPEQWARLLQTSNITKLEQKKNPQAVLDVLKFYDSNTVKQKYLSFTPPEKDGFPSGTPALNTKGSETSAVVTEEDDDDEDAAPPVIAPRPDHTKSIYTRSVIDPIPAPVGDSNVDSGAKSSDKQKKKAKMTDEEIMEKLRTIVSIGDPKKKYTRYEKIGQGASGTVFTATDVALGQEVAIKQINLQKQPKKELIINEILVMKELKNPNIVNFLDSYLVGDELFVVMEYLAGGSLTDVVTETCMDEAQIAAVCRECLQALEFLHANQVIHRDIKSDNVLLGMEGSVKLTDFGFCAQITPEQSKRSTMVGTPYWMAPEVVTRKAYGPKVDIWSLGIMAIEMVEGEPPYLNENPLRALYLIATNGTPELQNPEKLSPIFRDFLNRCLEMDVEKRGSAKELLQHPFLKLAKPLSSLTPLILAAKEAMKSNR</sequence>
<keyword id="KW-0002">3D-structure</keyword>
<keyword id="KW-0007">Acetylation</keyword>
<keyword id="KW-0021">Allosteric enzyme</keyword>
<keyword id="KW-0067">ATP-binding</keyword>
<keyword id="KW-0963">Cytoplasm</keyword>
<keyword id="KW-0903">Direct protein sequencing</keyword>
<keyword id="KW-0418">Kinase</keyword>
<keyword id="KW-0449">Lipoprotein</keyword>
<keyword id="KW-0472">Membrane</keyword>
<keyword id="KW-0547">Nucleotide-binding</keyword>
<keyword id="KW-0539">Nucleus</keyword>
<keyword id="KW-0597">Phosphoprotein</keyword>
<keyword id="KW-1185">Reference proteome</keyword>
<keyword id="KW-0723">Serine/threonine-protein kinase</keyword>
<keyword id="KW-0808">Transferase</keyword>
<keyword id="KW-0832">Ubl conjugation</keyword>
<protein>
    <recommendedName>
        <fullName>Serine/threonine-protein kinase PAK 2</fullName>
        <ecNumber>2.7.11.1</ecNumber>
    </recommendedName>
    <alternativeName>
        <fullName>Gamma-PAK</fullName>
    </alternativeName>
    <alternativeName>
        <fullName>p21-activated kinase 2</fullName>
        <shortName>PAK-2</shortName>
    </alternativeName>
    <component>
        <recommendedName>
            <fullName>PAK-2p27</fullName>
        </recommendedName>
    </component>
    <component>
        <recommendedName>
            <fullName>PAK-2p34</fullName>
        </recommendedName>
    </component>
</protein>